<sequence>MHRLRQCNMKWGAEEEKKIELQAQGLQPDTLFSDVIKRYLNKITPTKRGEKHEFNRLNRFLRHPVTDKYISDVSRRDIEDWIAERLESVKSESVRRELSTIGHIFKIALERWGYIQKSPMVGIQLPEKGKPRTQRVTEENINAIVAISEYVDTLKTAKARTAAAILFAVETAMRAGKICSLSWGNVNFEKRTAFLPMTKNGTSRTVPLTKNAIAILERLKVEIGDAGLCFDIKSSVLDATFRKLKKLAEREYLHFHDTRREALTRLSKKVDVMTLAKISGHKDISILQNVYYAPDMAEVAELLD</sequence>
<name>Y1424_HAEIN</name>
<feature type="chain" id="PRO_0000197537" description="Putative integrase/recombinase HI_1414">
    <location>
        <begin position="1"/>
        <end position="304"/>
    </location>
</feature>
<feature type="domain" description="Core-binding (CB)" evidence="2">
    <location>
        <begin position="30"/>
        <end position="109"/>
    </location>
</feature>
<feature type="domain" description="Tyr recombinase" evidence="1">
    <location>
        <begin position="131"/>
        <end position="304"/>
    </location>
</feature>
<feature type="active site" evidence="1">
    <location>
        <position position="174"/>
    </location>
</feature>
<feature type="active site" evidence="1">
    <location>
        <position position="199"/>
    </location>
</feature>
<feature type="active site" evidence="1">
    <location>
        <position position="256"/>
    </location>
</feature>
<feature type="active site" evidence="1">
    <location>
        <position position="259"/>
    </location>
</feature>
<feature type="active site" evidence="1">
    <location>
        <position position="281"/>
    </location>
</feature>
<feature type="active site" description="O-(3'-phospho-DNA)-tyrosine intermediate" evidence="1">
    <location>
        <position position="291"/>
    </location>
</feature>
<evidence type="ECO:0000255" key="1">
    <source>
        <dbReference type="PROSITE-ProRule" id="PRU01246"/>
    </source>
</evidence>
<evidence type="ECO:0000255" key="2">
    <source>
        <dbReference type="PROSITE-ProRule" id="PRU01248"/>
    </source>
</evidence>
<evidence type="ECO:0000305" key="3"/>
<gene>
    <name type="ordered locus">HI_1424</name>
</gene>
<proteinExistence type="inferred from homology"/>
<protein>
    <recommendedName>
        <fullName>Putative integrase/recombinase HI_1414</fullName>
    </recommendedName>
</protein>
<organism>
    <name type="scientific">Haemophilus influenzae (strain ATCC 51907 / DSM 11121 / KW20 / Rd)</name>
    <dbReference type="NCBI Taxonomy" id="71421"/>
    <lineage>
        <taxon>Bacteria</taxon>
        <taxon>Pseudomonadati</taxon>
        <taxon>Pseudomonadota</taxon>
        <taxon>Gammaproteobacteria</taxon>
        <taxon>Pasteurellales</taxon>
        <taxon>Pasteurellaceae</taxon>
        <taxon>Haemophilus</taxon>
    </lineage>
</organism>
<dbReference type="EMBL" id="L42023">
    <property type="protein sequence ID" value="AAC23061.1"/>
    <property type="molecule type" value="Genomic_DNA"/>
</dbReference>
<dbReference type="PIR" id="D64122">
    <property type="entry name" value="D64122"/>
</dbReference>
<dbReference type="RefSeq" id="NP_439573.1">
    <property type="nucleotide sequence ID" value="NC_000907.1"/>
</dbReference>
<dbReference type="SMR" id="P45198"/>
<dbReference type="STRING" id="71421.HI_1424"/>
<dbReference type="EnsemblBacteria" id="AAC23061">
    <property type="protein sequence ID" value="AAC23061"/>
    <property type="gene ID" value="HI_1424"/>
</dbReference>
<dbReference type="KEGG" id="hin:HI_1424"/>
<dbReference type="eggNOG" id="COG0582">
    <property type="taxonomic scope" value="Bacteria"/>
</dbReference>
<dbReference type="HOGENOM" id="CLU_027562_32_1_6"/>
<dbReference type="OrthoDB" id="5567253at2"/>
<dbReference type="PhylomeDB" id="P45198"/>
<dbReference type="BioCyc" id="HINF71421:G1GJ1-1446-MONOMER"/>
<dbReference type="Proteomes" id="UP000000579">
    <property type="component" value="Chromosome"/>
</dbReference>
<dbReference type="GO" id="GO:0003677">
    <property type="term" value="F:DNA binding"/>
    <property type="evidence" value="ECO:0007669"/>
    <property type="project" value="UniProtKB-KW"/>
</dbReference>
<dbReference type="GO" id="GO:0009009">
    <property type="term" value="F:site-specific recombinase activity"/>
    <property type="evidence" value="ECO:0000318"/>
    <property type="project" value="GO_Central"/>
</dbReference>
<dbReference type="GO" id="GO:0007059">
    <property type="term" value="P:chromosome segregation"/>
    <property type="evidence" value="ECO:0000318"/>
    <property type="project" value="GO_Central"/>
</dbReference>
<dbReference type="GO" id="GO:0006310">
    <property type="term" value="P:DNA recombination"/>
    <property type="evidence" value="ECO:0000318"/>
    <property type="project" value="GO_Central"/>
</dbReference>
<dbReference type="GO" id="GO:0075713">
    <property type="term" value="P:establishment of integrated proviral latency"/>
    <property type="evidence" value="ECO:0007669"/>
    <property type="project" value="UniProtKB-KW"/>
</dbReference>
<dbReference type="GO" id="GO:0046718">
    <property type="term" value="P:symbiont entry into host cell"/>
    <property type="evidence" value="ECO:0007669"/>
    <property type="project" value="UniProtKB-KW"/>
</dbReference>
<dbReference type="GO" id="GO:0044826">
    <property type="term" value="P:viral genome integration into host DNA"/>
    <property type="evidence" value="ECO:0007669"/>
    <property type="project" value="UniProtKB-KW"/>
</dbReference>
<dbReference type="CDD" id="cd00796">
    <property type="entry name" value="INT_Rci_Hp1_C"/>
    <property type="match status" value="1"/>
</dbReference>
<dbReference type="Gene3D" id="1.10.150.130">
    <property type="match status" value="1"/>
</dbReference>
<dbReference type="Gene3D" id="1.10.443.10">
    <property type="entry name" value="Intergrase catalytic core"/>
    <property type="match status" value="1"/>
</dbReference>
<dbReference type="InterPro" id="IPR044068">
    <property type="entry name" value="CB"/>
</dbReference>
<dbReference type="InterPro" id="IPR011010">
    <property type="entry name" value="DNA_brk_join_enz"/>
</dbReference>
<dbReference type="InterPro" id="IPR013762">
    <property type="entry name" value="Integrase-like_cat_sf"/>
</dbReference>
<dbReference type="InterPro" id="IPR002104">
    <property type="entry name" value="Integrase_catalytic"/>
</dbReference>
<dbReference type="InterPro" id="IPR010998">
    <property type="entry name" value="Integrase_recombinase_N"/>
</dbReference>
<dbReference type="InterPro" id="IPR050090">
    <property type="entry name" value="Tyrosine_recombinase_XerCD"/>
</dbReference>
<dbReference type="PANTHER" id="PTHR30349:SF94">
    <property type="entry name" value="INTEGRASE_RECOMBINASE HI_1414-RELATED"/>
    <property type="match status" value="1"/>
</dbReference>
<dbReference type="PANTHER" id="PTHR30349">
    <property type="entry name" value="PHAGE INTEGRASE-RELATED"/>
    <property type="match status" value="1"/>
</dbReference>
<dbReference type="Pfam" id="PF00589">
    <property type="entry name" value="Phage_integrase"/>
    <property type="match status" value="1"/>
</dbReference>
<dbReference type="SUPFAM" id="SSF56349">
    <property type="entry name" value="DNA breaking-rejoining enzymes"/>
    <property type="match status" value="1"/>
</dbReference>
<dbReference type="PROSITE" id="PS51900">
    <property type="entry name" value="CB"/>
    <property type="match status" value="1"/>
</dbReference>
<dbReference type="PROSITE" id="PS51898">
    <property type="entry name" value="TYR_RECOMBINASE"/>
    <property type="match status" value="1"/>
</dbReference>
<comment type="similarity">
    <text evidence="3">Belongs to the 'phage' integrase family.</text>
</comment>
<reference key="1">
    <citation type="journal article" date="1995" name="Science">
        <title>Whole-genome random sequencing and assembly of Haemophilus influenzae Rd.</title>
        <authorList>
            <person name="Fleischmann R.D."/>
            <person name="Adams M.D."/>
            <person name="White O."/>
            <person name="Clayton R.A."/>
            <person name="Kirkness E.F."/>
            <person name="Kerlavage A.R."/>
            <person name="Bult C.J."/>
            <person name="Tomb J.-F."/>
            <person name="Dougherty B.A."/>
            <person name="Merrick J.M."/>
            <person name="McKenney K."/>
            <person name="Sutton G.G."/>
            <person name="FitzHugh W."/>
            <person name="Fields C.A."/>
            <person name="Gocayne J.D."/>
            <person name="Scott J.D."/>
            <person name="Shirley R."/>
            <person name="Liu L.-I."/>
            <person name="Glodek A."/>
            <person name="Kelley J.M."/>
            <person name="Weidman J.F."/>
            <person name="Phillips C.A."/>
            <person name="Spriggs T."/>
            <person name="Hedblom E."/>
            <person name="Cotton M.D."/>
            <person name="Utterback T.R."/>
            <person name="Hanna M.C."/>
            <person name="Nguyen D.T."/>
            <person name="Saudek D.M."/>
            <person name="Brandon R.C."/>
            <person name="Fine L.D."/>
            <person name="Fritchman J.L."/>
            <person name="Fuhrmann J.L."/>
            <person name="Geoghagen N.S.M."/>
            <person name="Gnehm C.L."/>
            <person name="McDonald L.A."/>
            <person name="Small K.V."/>
            <person name="Fraser C.M."/>
            <person name="Smith H.O."/>
            <person name="Venter J.C."/>
        </authorList>
    </citation>
    <scope>NUCLEOTIDE SEQUENCE [LARGE SCALE GENOMIC DNA]</scope>
    <source>
        <strain>ATCC 51907 / DSM 11121 / KW20 / Rd</strain>
    </source>
</reference>
<keyword id="KW-0229">DNA integration</keyword>
<keyword id="KW-0233">DNA recombination</keyword>
<keyword id="KW-0238">DNA-binding</keyword>
<keyword id="KW-1185">Reference proteome</keyword>
<keyword id="KW-1179">Viral genome integration</keyword>
<keyword id="KW-1160">Virus entry into host cell</keyword>
<accession>P45198</accession>